<organism>
    <name type="scientific">Hydrogenobacter thermophilus (strain DSM 6534 / IAM 12695 / TK-6)</name>
    <dbReference type="NCBI Taxonomy" id="608538"/>
    <lineage>
        <taxon>Bacteria</taxon>
        <taxon>Pseudomonadati</taxon>
        <taxon>Aquificota</taxon>
        <taxon>Aquificia</taxon>
        <taxon>Aquificales</taxon>
        <taxon>Aquificaceae</taxon>
        <taxon>Hydrogenobacter</taxon>
    </lineage>
</organism>
<protein>
    <recommendedName>
        <fullName evidence="1">Serine hydroxymethyltransferase</fullName>
        <shortName evidence="1">SHMT</shortName>
        <shortName evidence="1">Serine methylase</shortName>
        <ecNumber evidence="1">2.1.2.1</ecNumber>
    </recommendedName>
    <alternativeName>
        <fullName>L-threonine/L-allo-threonine aldolase</fullName>
        <ecNumber>4.1.2.48</ecNumber>
    </alternativeName>
</protein>
<keyword id="KW-0028">Amino-acid biosynthesis</keyword>
<keyword id="KW-0963">Cytoplasm</keyword>
<keyword id="KW-0456">Lyase</keyword>
<keyword id="KW-0554">One-carbon metabolism</keyword>
<keyword id="KW-0663">Pyridoxal phosphate</keyword>
<keyword id="KW-1185">Reference proteome</keyword>
<keyword id="KW-0808">Transferase</keyword>
<proteinExistence type="evidence at protein level"/>
<comment type="function">
    <text evidence="2">Its primary function is to catalyze the reversible interconversion of serine and glycine with tetrahydrofolate (THF) serving as the one-carbon carrier. This reaction serves as the major source of one-carbon groups required for the biosynthesis of purines, thymidylate, methionine, and other important biomolecules. Also exhibits THF-independent aldolase activity toward beta-hydroxyamino acids, producing glycine and aldehydes, via a retro-aldol mechanism. Thus, is able to catalyze the cleavage of L-threonine, L-allo-threonine, L-threo-beta-phenylserine and L-erythro-beta-phenylserine. This second activity is likely to be physiological in H.thermophilus, which is an organism that lacks the ortholog gene for the 'real' threonine aldolase characterized in mesophilic bacteria (LtaE), yeast and plants.</text>
</comment>
<comment type="catalytic activity">
    <reaction>
        <text>(6R)-5,10-methylene-5,6,7,8-tetrahydrofolate + glycine + H2O = (6S)-5,6,7,8-tetrahydrofolate + L-serine</text>
        <dbReference type="Rhea" id="RHEA:15481"/>
        <dbReference type="ChEBI" id="CHEBI:15377"/>
        <dbReference type="ChEBI" id="CHEBI:15636"/>
        <dbReference type="ChEBI" id="CHEBI:33384"/>
        <dbReference type="ChEBI" id="CHEBI:57305"/>
        <dbReference type="ChEBI" id="CHEBI:57453"/>
        <dbReference type="EC" id="2.1.2.1"/>
    </reaction>
</comment>
<comment type="catalytic activity">
    <reaction>
        <text>L-threonine = acetaldehyde + glycine</text>
        <dbReference type="Rhea" id="RHEA:19625"/>
        <dbReference type="ChEBI" id="CHEBI:15343"/>
        <dbReference type="ChEBI" id="CHEBI:57305"/>
        <dbReference type="ChEBI" id="CHEBI:57926"/>
        <dbReference type="EC" id="4.1.2.48"/>
    </reaction>
</comment>
<comment type="catalytic activity">
    <reaction>
        <text>L-allo-threonine = acetaldehyde + glycine</text>
        <dbReference type="Rhea" id="RHEA:26209"/>
        <dbReference type="ChEBI" id="CHEBI:15343"/>
        <dbReference type="ChEBI" id="CHEBI:57305"/>
        <dbReference type="ChEBI" id="CHEBI:58585"/>
        <dbReference type="EC" id="4.1.2.48"/>
    </reaction>
</comment>
<comment type="cofactor">
    <cofactor evidence="1">
        <name>pyridoxal 5'-phosphate</name>
        <dbReference type="ChEBI" id="CHEBI:597326"/>
    </cofactor>
</comment>
<comment type="biophysicochemical properties">
    <kinetics>
        <KM evidence="2">0.28 mM for L-serine (at pH 7.5 and 70 degrees Celsius)</KM>
        <KM evidence="2">0.78 mM for glycine (at pH 7.5 and 70 degrees Celsius)</KM>
        <KM evidence="2">7.64 mM for L-threonine (at pH 7.5 and 70 degrees Celsius)</KM>
        <KM evidence="2">0.92 mM for L-allo-threonine (at pH 7.5 and 70 degrees Celsius)</KM>
        <KM evidence="2">0.59 mM for L-allo-threonine (at pH 7.5 and 75 degrees Celsius)</KM>
        <KM evidence="2">4.98 mM for DL-threo-beta-phenylserine (at pH 7.5 and 75 degrees Celsius)</KM>
        <KM evidence="2">2.63 mM for DL-erythro-beta-phenylserine (at pH 7.5 and 75 degrees Celsius)</KM>
        <text>kcat is 18.7 sec(-1) for the L-serine hydroxymethyltransferase reaction, 2.3 sec(-1) for the L-threonine cleavage, and 18.0 sec(-1) for the L-allo-threonine cleavage, at 70 degrees Celsius. In the THF-independent aldolase reaction, the rate constants for the erythro form substrates and for the substrates with beta-phenyl groups are larger than those for the threo form substrates and for the substrates with beta-methyl groups, respectively.</text>
    </kinetics>
    <phDependence>
        <text evidence="2">Optimum pH is 7.4 for the THF-independent L-allothreonine aldolase activity. More than 95% of full activity remains at pH 8.4, although the activities are reduced to about 90% at pH 6.9 and about 75% at pH 5.9.</text>
    </phDependence>
    <temperatureDependence>
        <text evidence="2">Highly thermostable. Retains almost complete THF-independent L-allo-threonine aldolase activity after being incubated at 75 degrees Celsius for 10 minutes, and retains about 77% residual activity after being treated at 87 degrees Celsius for the same time.</text>
    </temperatureDependence>
</comment>
<comment type="pathway">
    <text evidence="1">One-carbon metabolism; tetrahydrofolate interconversion.</text>
</comment>
<comment type="pathway">
    <text evidence="1">Amino-acid biosynthesis; glycine biosynthesis; glycine from L-serine: step 1/1.</text>
</comment>
<comment type="subunit">
    <text evidence="1 4">Homodimer.</text>
</comment>
<comment type="subcellular location">
    <subcellularLocation>
        <location evidence="1">Cytoplasm</location>
    </subcellularLocation>
</comment>
<comment type="similarity">
    <text evidence="1 3">Belongs to the SHMT family.</text>
</comment>
<sequence>MRHLFNTDAEIYEAIVKEYERQFYHLELIASENFTSLAVMEAQGSVMTNKYAEGLPHKRYYGGCEFVDIAEDLAIERAKALFDAEHANVQPHSGTQANMAVYMAVLKPGDTIMGMDLSHGGHLTHGAKVNFSGKIYNAVYYGVHPETHLIDYDQLYRLAKEHKPKLIVGGASAYPRVIDWAKLREIADSVGAYLMVDMAHYAGLIAGGVYPNPVPYAHFVTSTTHKTLRGPRSGFILCKKEFAKDIDKSVFPGIQGGPLMHVIAAKAVAFKEAMSQEFKEYARQVVANARVLAEEFIKEGFKVVSGGTDSHIVLLDLRDTGLTGREVEEALGKANITVNKNAVPFDPLPPVKTSGIRLGTPAMTTRGMKEDQMRIIARLISKVIKNIGDEKVIEYVRQEVIEMCEQFPLYPELREEINHLAKIKATY</sequence>
<accession>D3DKC4</accession>
<evidence type="ECO:0000255" key="1">
    <source>
        <dbReference type="HAMAP-Rule" id="MF_00051"/>
    </source>
</evidence>
<evidence type="ECO:0000269" key="2">
    <source>
    </source>
</evidence>
<evidence type="ECO:0000305" key="3"/>
<evidence type="ECO:0000305" key="4">
    <source>
    </source>
</evidence>
<reference key="1">
    <citation type="journal article" date="2010" name="J. Bacteriol.">
        <title>Complete genome sequence of the thermophilic, obligately chemolithoautotrophic hydrogen-oxidizing bacterium Hydrogenobacter thermophilus TK-6.</title>
        <authorList>
            <person name="Arai H."/>
            <person name="Kanbe H."/>
            <person name="Ishii M."/>
            <person name="Igarashi Y."/>
        </authorList>
    </citation>
    <scope>NUCLEOTIDE SEQUENCE [LARGE SCALE GENOMIC DNA]</scope>
    <source>
        <strain>DSM 6534 / IAM 12695 / TK-6</strain>
    </source>
</reference>
<reference key="2">
    <citation type="journal article" date="2011" name="Stand. Genomic Sci.">
        <title>Complete genome sequence of Hydrogenobacter thermophilus type strain (TK-6).</title>
        <authorList>
            <consortium name="US DOE Joint Genome Institute (JGI-PGF)"/>
            <person name="Zeytun A."/>
            <person name="Sikorski J."/>
            <person name="Nolan M."/>
            <person name="Lapidus A."/>
            <person name="Lucas S."/>
            <person name="Han J."/>
            <person name="Tice H."/>
            <person name="Cheng J.F."/>
            <person name="Tapia R."/>
            <person name="Goodwin L."/>
            <person name="Pitluck S."/>
            <person name="Liolios K."/>
            <person name="Ivanova N."/>
            <person name="Mavromatis K."/>
            <person name="Mikhailova N."/>
            <person name="Ovchinnikova G."/>
            <person name="Pati A."/>
            <person name="Chen A."/>
            <person name="Palaniappan K."/>
            <person name="Ngatchou-Djao O.D."/>
            <person name="Land M."/>
            <person name="Hauser L."/>
            <person name="Jeffries C.D."/>
            <person name="Han C."/>
            <person name="Detter J.C."/>
            <person name="Ubler S."/>
            <person name="Rohde M."/>
            <person name="Tindall B.J."/>
            <person name="Goker M."/>
            <person name="Wirth R."/>
            <person name="Woyke T."/>
            <person name="Bristow J."/>
            <person name="Eisen J.A."/>
            <person name="Markowitz V."/>
            <person name="Hugenholtz P."/>
            <person name="Klenk H.P."/>
            <person name="Kyrpides N.C."/>
        </authorList>
    </citation>
    <scope>NUCLEOTIDE SEQUENCE [LARGE SCALE GENOMIC DNA]</scope>
    <source>
        <strain>DSM 6534 / IAM 12695 / TK-6</strain>
    </source>
</reference>
<reference key="3">
    <citation type="journal article" date="2012" name="FEBS J.">
        <title>Mechanism for folate-independent aldolase reaction catalyzed by serine hydroxymethyltransferase.</title>
        <authorList>
            <person name="Chiba Y."/>
            <person name="Terada T."/>
            <person name="Kameya M."/>
            <person name="Shimizu K."/>
            <person name="Arai H."/>
            <person name="Ishii M."/>
            <person name="Igarashi Y."/>
        </authorList>
    </citation>
    <scope>FUNCTION</scope>
    <scope>THF-DEPENDENT SERINE HYDROXYMETHYLTRANSFERASE ACTIVITY</scope>
    <scope>THF-INDEPENDENT ALDOLASE ACTIVITY</scope>
    <scope>REACTION MECHANISM</scope>
    <scope>SUBSTRATE SPECIFICITY</scope>
    <scope>BIOPHYSICOCHEMICAL PROPERTIES</scope>
    <scope>SUBUNIT</scope>
    <source>
        <strain>DSM 6534 / IAM 12695 / TK-6</strain>
    </source>
</reference>
<feature type="chain" id="PRO_0000416794" description="Serine hydroxymethyltransferase">
    <location>
        <begin position="1"/>
        <end position="427"/>
    </location>
</feature>
<feature type="binding site" evidence="1">
    <location>
        <position position="117"/>
    </location>
    <ligand>
        <name>(6S)-5,6,7,8-tetrahydrofolate</name>
        <dbReference type="ChEBI" id="CHEBI:57453"/>
    </ligand>
</feature>
<feature type="binding site" evidence="1">
    <location>
        <begin position="121"/>
        <end position="123"/>
    </location>
    <ligand>
        <name>(6S)-5,6,7,8-tetrahydrofolate</name>
        <dbReference type="ChEBI" id="CHEBI:57453"/>
    </ligand>
</feature>
<feature type="site" description="Plays an important role in substrate specificity" evidence="1">
    <location>
        <position position="225"/>
    </location>
</feature>
<feature type="modified residue" description="N6-(pyridoxal phosphate)lysine" evidence="1">
    <location>
        <position position="226"/>
    </location>
</feature>
<gene>
    <name evidence="1" type="primary">glyA</name>
    <name type="ordered locus">HTH_1832</name>
    <name type="ordered locus">Hydth_1815</name>
</gene>
<name>GLYA_HYDTT</name>
<dbReference type="EC" id="2.1.2.1" evidence="1"/>
<dbReference type="EC" id="4.1.2.48"/>
<dbReference type="EMBL" id="AP011112">
    <property type="protein sequence ID" value="BAI70276.1"/>
    <property type="molecule type" value="Genomic_DNA"/>
</dbReference>
<dbReference type="EMBL" id="CP002221">
    <property type="protein sequence ID" value="ADO46196.1"/>
    <property type="molecule type" value="Genomic_DNA"/>
</dbReference>
<dbReference type="RefSeq" id="WP_012964456.1">
    <property type="nucleotide sequence ID" value="NC_013799.1"/>
</dbReference>
<dbReference type="SMR" id="D3DKC4"/>
<dbReference type="STRING" id="608538.HTH_1832"/>
<dbReference type="KEGG" id="hte:Hydth_1815"/>
<dbReference type="KEGG" id="hth:HTH_1832"/>
<dbReference type="PATRIC" id="fig|608538.5.peg.1848"/>
<dbReference type="eggNOG" id="COG0112">
    <property type="taxonomic scope" value="Bacteria"/>
</dbReference>
<dbReference type="HOGENOM" id="CLU_022477_2_1_0"/>
<dbReference type="OrthoDB" id="9803846at2"/>
<dbReference type="UniPathway" id="UPA00193"/>
<dbReference type="UniPathway" id="UPA00288">
    <property type="reaction ID" value="UER01023"/>
</dbReference>
<dbReference type="Proteomes" id="UP000002574">
    <property type="component" value="Chromosome"/>
</dbReference>
<dbReference type="GO" id="GO:0005829">
    <property type="term" value="C:cytosol"/>
    <property type="evidence" value="ECO:0007669"/>
    <property type="project" value="TreeGrafter"/>
</dbReference>
<dbReference type="GO" id="GO:0004372">
    <property type="term" value="F:glycine hydroxymethyltransferase activity"/>
    <property type="evidence" value="ECO:0007669"/>
    <property type="project" value="UniProtKB-UniRule"/>
</dbReference>
<dbReference type="GO" id="GO:0008732">
    <property type="term" value="F:L-allo-threonine aldolase activity"/>
    <property type="evidence" value="ECO:0007669"/>
    <property type="project" value="RHEA"/>
</dbReference>
<dbReference type="GO" id="GO:0030170">
    <property type="term" value="F:pyridoxal phosphate binding"/>
    <property type="evidence" value="ECO:0007669"/>
    <property type="project" value="UniProtKB-UniRule"/>
</dbReference>
<dbReference type="GO" id="GO:0019264">
    <property type="term" value="P:glycine biosynthetic process from serine"/>
    <property type="evidence" value="ECO:0007669"/>
    <property type="project" value="UniProtKB-UniRule"/>
</dbReference>
<dbReference type="GO" id="GO:0035999">
    <property type="term" value="P:tetrahydrofolate interconversion"/>
    <property type="evidence" value="ECO:0007669"/>
    <property type="project" value="UniProtKB-UniRule"/>
</dbReference>
<dbReference type="CDD" id="cd00378">
    <property type="entry name" value="SHMT"/>
    <property type="match status" value="1"/>
</dbReference>
<dbReference type="FunFam" id="3.40.640.10:FF:000001">
    <property type="entry name" value="Serine hydroxymethyltransferase"/>
    <property type="match status" value="1"/>
</dbReference>
<dbReference type="FunFam" id="3.90.1150.10:FF:000003">
    <property type="entry name" value="Serine hydroxymethyltransferase"/>
    <property type="match status" value="1"/>
</dbReference>
<dbReference type="Gene3D" id="3.90.1150.10">
    <property type="entry name" value="Aspartate Aminotransferase, domain 1"/>
    <property type="match status" value="1"/>
</dbReference>
<dbReference type="Gene3D" id="3.40.640.10">
    <property type="entry name" value="Type I PLP-dependent aspartate aminotransferase-like (Major domain)"/>
    <property type="match status" value="1"/>
</dbReference>
<dbReference type="HAMAP" id="MF_00051">
    <property type="entry name" value="SHMT"/>
    <property type="match status" value="1"/>
</dbReference>
<dbReference type="InterPro" id="IPR015424">
    <property type="entry name" value="PyrdxlP-dep_Trfase"/>
</dbReference>
<dbReference type="InterPro" id="IPR015421">
    <property type="entry name" value="PyrdxlP-dep_Trfase_major"/>
</dbReference>
<dbReference type="InterPro" id="IPR015422">
    <property type="entry name" value="PyrdxlP-dep_Trfase_small"/>
</dbReference>
<dbReference type="InterPro" id="IPR001085">
    <property type="entry name" value="Ser_HO-MeTrfase"/>
</dbReference>
<dbReference type="InterPro" id="IPR049943">
    <property type="entry name" value="Ser_HO-MeTrfase-like"/>
</dbReference>
<dbReference type="InterPro" id="IPR019798">
    <property type="entry name" value="Ser_HO-MeTrfase_PLP_BS"/>
</dbReference>
<dbReference type="InterPro" id="IPR039429">
    <property type="entry name" value="SHMT-like_dom"/>
</dbReference>
<dbReference type="NCBIfam" id="NF000586">
    <property type="entry name" value="PRK00011.1"/>
    <property type="match status" value="1"/>
</dbReference>
<dbReference type="PANTHER" id="PTHR11680">
    <property type="entry name" value="SERINE HYDROXYMETHYLTRANSFERASE"/>
    <property type="match status" value="1"/>
</dbReference>
<dbReference type="PANTHER" id="PTHR11680:SF35">
    <property type="entry name" value="SERINE HYDROXYMETHYLTRANSFERASE 1"/>
    <property type="match status" value="1"/>
</dbReference>
<dbReference type="Pfam" id="PF00464">
    <property type="entry name" value="SHMT"/>
    <property type="match status" value="1"/>
</dbReference>
<dbReference type="PIRSF" id="PIRSF000412">
    <property type="entry name" value="SHMT"/>
    <property type="match status" value="1"/>
</dbReference>
<dbReference type="SUPFAM" id="SSF53383">
    <property type="entry name" value="PLP-dependent transferases"/>
    <property type="match status" value="1"/>
</dbReference>
<dbReference type="PROSITE" id="PS00096">
    <property type="entry name" value="SHMT"/>
    <property type="match status" value="1"/>
</dbReference>